<comment type="catalytic activity">
    <reaction>
        <text>N-(5-phospho-beta-D-ribosyl)anthranilate = 1-(2-carboxyphenylamino)-1-deoxy-D-ribulose 5-phosphate</text>
        <dbReference type="Rhea" id="RHEA:21540"/>
        <dbReference type="ChEBI" id="CHEBI:18277"/>
        <dbReference type="ChEBI" id="CHEBI:58613"/>
        <dbReference type="EC" id="5.3.1.24"/>
    </reaction>
</comment>
<comment type="pathway">
    <text>Amino-acid biosynthesis; L-tryptophan biosynthesis; L-tryptophan from chorismate: step 3/5.</text>
</comment>
<comment type="similarity">
    <text evidence="1">Belongs to the TrpF family.</text>
</comment>
<keyword id="KW-0028">Amino-acid biosynthesis</keyword>
<keyword id="KW-0057">Aromatic amino acid biosynthesis</keyword>
<keyword id="KW-0413">Isomerase</keyword>
<keyword id="KW-0822">Tryptophan biosynthesis</keyword>
<reference key="1">
    <citation type="journal article" date="2002" name="J. Mol. Microbiol. Biotechnol.">
        <title>The genome of Methanosarcina mazei: evidence for lateral gene transfer between Bacteria and Archaea.</title>
        <authorList>
            <person name="Deppenmeier U."/>
            <person name="Johann A."/>
            <person name="Hartsch T."/>
            <person name="Merkl R."/>
            <person name="Schmitz R.A."/>
            <person name="Martinez-Arias R."/>
            <person name="Henne A."/>
            <person name="Wiezer A."/>
            <person name="Baeumer S."/>
            <person name="Jacobi C."/>
            <person name="Brueggemann H."/>
            <person name="Lienard T."/>
            <person name="Christmann A."/>
            <person name="Boemecke M."/>
            <person name="Steckel S."/>
            <person name="Bhattacharyya A."/>
            <person name="Lykidis A."/>
            <person name="Overbeek R."/>
            <person name="Klenk H.-P."/>
            <person name="Gunsalus R.P."/>
            <person name="Fritz H.-J."/>
            <person name="Gottschalk G."/>
        </authorList>
    </citation>
    <scope>NUCLEOTIDE SEQUENCE [LARGE SCALE GENOMIC DNA]</scope>
    <source>
        <strain>ATCC BAA-159 / DSM 3647 / Goe1 / Go1 / JCM 11833 / OCM 88</strain>
    </source>
</reference>
<proteinExistence type="inferred from homology"/>
<feature type="chain" id="PRO_0000154405" description="N-(5'-phosphoribosyl)anthranilate isomerase 1">
    <location>
        <begin position="1"/>
        <end position="234"/>
    </location>
</feature>
<protein>
    <recommendedName>
        <fullName>N-(5'-phosphoribosyl)anthranilate isomerase 1</fullName>
        <shortName>PRAI 1</shortName>
        <ecNumber>5.3.1.24</ecNumber>
    </recommendedName>
</protein>
<dbReference type="EC" id="5.3.1.24"/>
<dbReference type="EMBL" id="AE008384">
    <property type="protein sequence ID" value="AAM32515.1"/>
    <property type="molecule type" value="Genomic_DNA"/>
</dbReference>
<dbReference type="RefSeq" id="WP_011034727.1">
    <property type="nucleotide sequence ID" value="NC_003901.1"/>
</dbReference>
<dbReference type="SMR" id="Q8PT98"/>
<dbReference type="KEGG" id="mma:MM_2819"/>
<dbReference type="PATRIC" id="fig|192952.21.peg.3254"/>
<dbReference type="eggNOG" id="arCOG01983">
    <property type="taxonomic scope" value="Archaea"/>
</dbReference>
<dbReference type="HOGENOM" id="CLU_076364_2_1_2"/>
<dbReference type="UniPathway" id="UPA00035">
    <property type="reaction ID" value="UER00042"/>
</dbReference>
<dbReference type="Proteomes" id="UP000000595">
    <property type="component" value="Chromosome"/>
</dbReference>
<dbReference type="GO" id="GO:0004640">
    <property type="term" value="F:phosphoribosylanthranilate isomerase activity"/>
    <property type="evidence" value="ECO:0007669"/>
    <property type="project" value="UniProtKB-UniRule"/>
</dbReference>
<dbReference type="GO" id="GO:0000162">
    <property type="term" value="P:L-tryptophan biosynthetic process"/>
    <property type="evidence" value="ECO:0007669"/>
    <property type="project" value="UniProtKB-UniRule"/>
</dbReference>
<dbReference type="CDD" id="cd00405">
    <property type="entry name" value="PRAI"/>
    <property type="match status" value="1"/>
</dbReference>
<dbReference type="Gene3D" id="3.20.20.70">
    <property type="entry name" value="Aldolase class I"/>
    <property type="match status" value="1"/>
</dbReference>
<dbReference type="HAMAP" id="MF_00135">
    <property type="entry name" value="PRAI"/>
    <property type="match status" value="1"/>
</dbReference>
<dbReference type="InterPro" id="IPR013785">
    <property type="entry name" value="Aldolase_TIM"/>
</dbReference>
<dbReference type="InterPro" id="IPR001240">
    <property type="entry name" value="PRAI_dom"/>
</dbReference>
<dbReference type="InterPro" id="IPR011060">
    <property type="entry name" value="RibuloseP-bd_barrel"/>
</dbReference>
<dbReference type="InterPro" id="IPR044643">
    <property type="entry name" value="TrpF_fam"/>
</dbReference>
<dbReference type="PANTHER" id="PTHR42894">
    <property type="entry name" value="N-(5'-PHOSPHORIBOSYL)ANTHRANILATE ISOMERASE"/>
    <property type="match status" value="1"/>
</dbReference>
<dbReference type="PANTHER" id="PTHR42894:SF1">
    <property type="entry name" value="N-(5'-PHOSPHORIBOSYL)ANTHRANILATE ISOMERASE"/>
    <property type="match status" value="1"/>
</dbReference>
<dbReference type="Pfam" id="PF00697">
    <property type="entry name" value="PRAI"/>
    <property type="match status" value="1"/>
</dbReference>
<dbReference type="SUPFAM" id="SSF51366">
    <property type="entry name" value="Ribulose-phoshate binding barrel"/>
    <property type="match status" value="1"/>
</dbReference>
<gene>
    <name type="primary">trpF1</name>
    <name type="ordered locus">MM_2819</name>
</gene>
<name>TRPF1_METMA</name>
<organism>
    <name type="scientific">Methanosarcina mazei (strain ATCC BAA-159 / DSM 3647 / Goe1 / Go1 / JCM 11833 / OCM 88)</name>
    <name type="common">Methanosarcina frisia</name>
    <dbReference type="NCBI Taxonomy" id="192952"/>
    <lineage>
        <taxon>Archaea</taxon>
        <taxon>Methanobacteriati</taxon>
        <taxon>Methanobacteriota</taxon>
        <taxon>Stenosarchaea group</taxon>
        <taxon>Methanomicrobia</taxon>
        <taxon>Methanosarcinales</taxon>
        <taxon>Methanosarcinaceae</taxon>
        <taxon>Methanosarcina</taxon>
    </lineage>
</organism>
<evidence type="ECO:0000305" key="1"/>
<accession>Q8PT98</accession>
<sequence length="234" mass="25506">MRKRLKTRIKICGMCSPEDMEMAALYGADAVGFITEVPIESPRKLDSDTAASLISKLPECLDSVMVIMPENSSRALELIEKVRPDIVQIHSNLPSVELEVIREKTDIPIIKTLSVPAGMGASRVQSPVKRLLDEVRRLEESGVVDSILLDSGIAGKTGGTGYVHDWDLSRRIADETELPLILAGGLKPENVQEAIRIVSPYAVDAASGVEILGKKDAVKIRSFIEEVRCANAFL</sequence>